<sequence length="50" mass="5436">MDDFAEFFPTLVLDEPEVARRPARDAEVLAILADAERPGGSNCTAWCVVA</sequence>
<proteinExistence type="inferred from homology"/>
<protein>
    <recommendedName>
        <fullName>Mating-type pheromone BAP1(3)</fullName>
    </recommendedName>
</protein>
<accession>Q02594</accession>
<name>BAP13_SCHCO</name>
<evidence type="ECO:0000255" key="1"/>
<evidence type="ECO:0000305" key="2"/>
<gene>
    <name type="primary">BAP1(3)</name>
</gene>
<organism>
    <name type="scientific">Schizophyllum commune</name>
    <name type="common">Split gill fungus</name>
    <dbReference type="NCBI Taxonomy" id="5334"/>
    <lineage>
        <taxon>Eukaryota</taxon>
        <taxon>Fungi</taxon>
        <taxon>Dikarya</taxon>
        <taxon>Basidiomycota</taxon>
        <taxon>Agaricomycotina</taxon>
        <taxon>Agaricomycetes</taxon>
        <taxon>Agaricomycetidae</taxon>
        <taxon>Agaricales</taxon>
        <taxon>Schizophyllaceae</taxon>
        <taxon>Schizophyllum</taxon>
    </lineage>
</organism>
<comment type="function">
    <text>Activates B-regulated development.</text>
</comment>
<comment type="subcellular location">
    <subcellularLocation>
        <location evidence="2">Cell membrane</location>
        <topology evidence="2">Lipid-anchor</topology>
        <orientation evidence="2">Cytoplasmic side</orientation>
    </subcellularLocation>
</comment>
<keyword id="KW-1003">Cell membrane</keyword>
<keyword id="KW-0449">Lipoprotein</keyword>
<keyword id="KW-0472">Membrane</keyword>
<keyword id="KW-0488">Methylation</keyword>
<keyword id="KW-0588">Pheromone</keyword>
<keyword id="KW-0636">Prenylation</keyword>
<feature type="propeptide" id="PRO_0000020789" evidence="1">
    <location>
        <begin position="1"/>
        <end status="unknown"/>
    </location>
</feature>
<feature type="peptide" id="PRO_0000020790" description="Mating-type pheromone BAP1(3)">
    <location>
        <begin status="unknown"/>
        <end position="47"/>
    </location>
</feature>
<feature type="propeptide" id="PRO_0000020791" description="Removed in mature form" evidence="1">
    <location>
        <begin position="48"/>
        <end position="50"/>
    </location>
</feature>
<feature type="modified residue" description="Cysteine methyl ester" evidence="1">
    <location>
        <position position="47"/>
    </location>
</feature>
<feature type="lipid moiety-binding region" description="S-farnesyl cysteine" evidence="1">
    <location>
        <position position="47"/>
    </location>
</feature>
<reference key="1">
    <citation type="journal article" date="1995" name="EMBO J.">
        <title>The mating-type locus B alpha 1 of Schizophyllum commune contains a pheromone receptor gene and putative pheromone genes.</title>
        <authorList>
            <person name="Wendland J."/>
            <person name="Vaillancourt L.J."/>
            <person name="Hegner J."/>
            <person name="Lengeler K.B."/>
            <person name="Laddison K.J."/>
            <person name="Specht C.A."/>
            <person name="Raper C.A."/>
            <person name="Kothe E."/>
        </authorList>
    </citation>
    <scope>NUCLEOTIDE SEQUENCE [GENOMIC DNA]</scope>
    <source>
        <strain>ATCC 44201 / CBS 340.81 / UVM 4-40 / 4-40</strain>
    </source>
</reference>
<dbReference type="EMBL" id="U32677">
    <property type="protein sequence ID" value="AAC49156.1"/>
    <property type="molecule type" value="Genomic_DNA"/>
</dbReference>
<dbReference type="PIR" id="S61922">
    <property type="entry name" value="S61922"/>
</dbReference>
<dbReference type="GO" id="GO:0005886">
    <property type="term" value="C:plasma membrane"/>
    <property type="evidence" value="ECO:0007669"/>
    <property type="project" value="UniProtKB-SubCell"/>
</dbReference>
<dbReference type="GO" id="GO:0000772">
    <property type="term" value="F:mating pheromone activity"/>
    <property type="evidence" value="ECO:0007669"/>
    <property type="project" value="InterPro"/>
</dbReference>
<dbReference type="InterPro" id="IPR012597">
    <property type="entry name" value="Pheromone"/>
</dbReference>
<dbReference type="Pfam" id="PF08015">
    <property type="entry name" value="Pheromone"/>
    <property type="match status" value="1"/>
</dbReference>